<feature type="chain" id="PRO_0000126434" description="Small ribosomal subunit protein uS8">
    <location>
        <begin position="1"/>
        <end position="131"/>
    </location>
</feature>
<reference key="1">
    <citation type="journal article" date="2004" name="PLoS Biol.">
        <title>Genomic insights into methanotrophy: the complete genome sequence of Methylococcus capsulatus (Bath).</title>
        <authorList>
            <person name="Ward N.L."/>
            <person name="Larsen O."/>
            <person name="Sakwa J."/>
            <person name="Bruseth L."/>
            <person name="Khouri H.M."/>
            <person name="Durkin A.S."/>
            <person name="Dimitrov G."/>
            <person name="Jiang L."/>
            <person name="Scanlan D."/>
            <person name="Kang K.H."/>
            <person name="Lewis M.R."/>
            <person name="Nelson K.E."/>
            <person name="Methe B.A."/>
            <person name="Wu M."/>
            <person name="Heidelberg J.F."/>
            <person name="Paulsen I.T."/>
            <person name="Fouts D.E."/>
            <person name="Ravel J."/>
            <person name="Tettelin H."/>
            <person name="Ren Q."/>
            <person name="Read T.D."/>
            <person name="DeBoy R.T."/>
            <person name="Seshadri R."/>
            <person name="Salzberg S.L."/>
            <person name="Jensen H.B."/>
            <person name="Birkeland N.K."/>
            <person name="Nelson W.C."/>
            <person name="Dodson R.J."/>
            <person name="Grindhaug S.H."/>
            <person name="Holt I.E."/>
            <person name="Eidhammer I."/>
            <person name="Jonasen I."/>
            <person name="Vanaken S."/>
            <person name="Utterback T.R."/>
            <person name="Feldblyum T.V."/>
            <person name="Fraser C.M."/>
            <person name="Lillehaug J.R."/>
            <person name="Eisen J.A."/>
        </authorList>
    </citation>
    <scope>NUCLEOTIDE SEQUENCE [LARGE SCALE GENOMIC DNA]</scope>
    <source>
        <strain>ATCC 33009 / NCIMB 11132 / Bath</strain>
    </source>
</reference>
<dbReference type="EMBL" id="AE017282">
    <property type="protein sequence ID" value="AAU91477.1"/>
    <property type="molecule type" value="Genomic_DNA"/>
</dbReference>
<dbReference type="RefSeq" id="WP_010961586.1">
    <property type="nucleotide sequence ID" value="NC_002977.6"/>
</dbReference>
<dbReference type="SMR" id="Q605C6"/>
<dbReference type="STRING" id="243233.MCA2358"/>
<dbReference type="GeneID" id="88224560"/>
<dbReference type="KEGG" id="mca:MCA2358"/>
<dbReference type="eggNOG" id="COG0096">
    <property type="taxonomic scope" value="Bacteria"/>
</dbReference>
<dbReference type="HOGENOM" id="CLU_098428_0_0_6"/>
<dbReference type="Proteomes" id="UP000006821">
    <property type="component" value="Chromosome"/>
</dbReference>
<dbReference type="GO" id="GO:1990904">
    <property type="term" value="C:ribonucleoprotein complex"/>
    <property type="evidence" value="ECO:0007669"/>
    <property type="project" value="UniProtKB-KW"/>
</dbReference>
<dbReference type="GO" id="GO:0005840">
    <property type="term" value="C:ribosome"/>
    <property type="evidence" value="ECO:0007669"/>
    <property type="project" value="UniProtKB-KW"/>
</dbReference>
<dbReference type="GO" id="GO:0019843">
    <property type="term" value="F:rRNA binding"/>
    <property type="evidence" value="ECO:0007669"/>
    <property type="project" value="UniProtKB-UniRule"/>
</dbReference>
<dbReference type="GO" id="GO:0003735">
    <property type="term" value="F:structural constituent of ribosome"/>
    <property type="evidence" value="ECO:0007669"/>
    <property type="project" value="InterPro"/>
</dbReference>
<dbReference type="GO" id="GO:0006412">
    <property type="term" value="P:translation"/>
    <property type="evidence" value="ECO:0007669"/>
    <property type="project" value="UniProtKB-UniRule"/>
</dbReference>
<dbReference type="FunFam" id="3.30.1370.30:FF:000002">
    <property type="entry name" value="30S ribosomal protein S8"/>
    <property type="match status" value="1"/>
</dbReference>
<dbReference type="FunFam" id="3.30.1490.10:FF:000001">
    <property type="entry name" value="30S ribosomal protein S8"/>
    <property type="match status" value="1"/>
</dbReference>
<dbReference type="Gene3D" id="3.30.1370.30">
    <property type="match status" value="1"/>
</dbReference>
<dbReference type="Gene3D" id="3.30.1490.10">
    <property type="match status" value="1"/>
</dbReference>
<dbReference type="HAMAP" id="MF_01302_B">
    <property type="entry name" value="Ribosomal_uS8_B"/>
    <property type="match status" value="1"/>
</dbReference>
<dbReference type="InterPro" id="IPR000630">
    <property type="entry name" value="Ribosomal_uS8"/>
</dbReference>
<dbReference type="InterPro" id="IPR047863">
    <property type="entry name" value="Ribosomal_uS8_CS"/>
</dbReference>
<dbReference type="InterPro" id="IPR035987">
    <property type="entry name" value="Ribosomal_uS8_sf"/>
</dbReference>
<dbReference type="NCBIfam" id="NF001109">
    <property type="entry name" value="PRK00136.1"/>
    <property type="match status" value="1"/>
</dbReference>
<dbReference type="PANTHER" id="PTHR11758">
    <property type="entry name" value="40S RIBOSOMAL PROTEIN S15A"/>
    <property type="match status" value="1"/>
</dbReference>
<dbReference type="Pfam" id="PF00410">
    <property type="entry name" value="Ribosomal_S8"/>
    <property type="match status" value="1"/>
</dbReference>
<dbReference type="SUPFAM" id="SSF56047">
    <property type="entry name" value="Ribosomal protein S8"/>
    <property type="match status" value="1"/>
</dbReference>
<dbReference type="PROSITE" id="PS00053">
    <property type="entry name" value="RIBOSOMAL_S8"/>
    <property type="match status" value="1"/>
</dbReference>
<protein>
    <recommendedName>
        <fullName evidence="1">Small ribosomal subunit protein uS8</fullName>
    </recommendedName>
    <alternativeName>
        <fullName evidence="2">30S ribosomal protein S8</fullName>
    </alternativeName>
</protein>
<proteinExistence type="inferred from homology"/>
<keyword id="KW-1185">Reference proteome</keyword>
<keyword id="KW-0687">Ribonucleoprotein</keyword>
<keyword id="KW-0689">Ribosomal protein</keyword>
<keyword id="KW-0694">RNA-binding</keyword>
<keyword id="KW-0699">rRNA-binding</keyword>
<sequence>MSMSDPLSDLLTRIRNGQAAGKAEIIVPASKLKRAVCQVLKEEGYIAGFSDVTEQGKHNIRVELKYHNGAPVIDKIQRVSKPGCRRYRGRDELPKVMGGFGIAIVSTSKGVMSDRRARSVGEGGEVLCVVE</sequence>
<comment type="function">
    <text evidence="1">One of the primary rRNA binding proteins, it binds directly to 16S rRNA central domain where it helps coordinate assembly of the platform of the 30S subunit.</text>
</comment>
<comment type="subunit">
    <text evidence="1">Part of the 30S ribosomal subunit. Contacts proteins S5 and S12.</text>
</comment>
<comment type="similarity">
    <text evidence="1">Belongs to the universal ribosomal protein uS8 family.</text>
</comment>
<evidence type="ECO:0000255" key="1">
    <source>
        <dbReference type="HAMAP-Rule" id="MF_01302"/>
    </source>
</evidence>
<evidence type="ECO:0000305" key="2"/>
<accession>Q605C6</accession>
<organism>
    <name type="scientific">Methylococcus capsulatus (strain ATCC 33009 / NCIMB 11132 / Bath)</name>
    <dbReference type="NCBI Taxonomy" id="243233"/>
    <lineage>
        <taxon>Bacteria</taxon>
        <taxon>Pseudomonadati</taxon>
        <taxon>Pseudomonadota</taxon>
        <taxon>Gammaproteobacteria</taxon>
        <taxon>Methylococcales</taxon>
        <taxon>Methylococcaceae</taxon>
        <taxon>Methylococcus</taxon>
    </lineage>
</organism>
<gene>
    <name evidence="1" type="primary">rpsH</name>
    <name type="ordered locus">MCA2358</name>
</gene>
<name>RS8_METCA</name>